<sequence length="101" mass="11862">MLADKVKLSAKEILEKEFKTGVRGYKQEEVDKFLDMVIKDYETFNQEIEKLQQENLHLSKQLEEAVEQGKRQPAQSNTTNFDILKRLSNLEKHVFGSKLYD</sequence>
<accession>A8FEF4</accession>
<feature type="chain" id="PRO_0000337914" description="Cell cycle protein GpsB">
    <location>
        <begin position="1"/>
        <end position="101"/>
    </location>
</feature>
<feature type="coiled-coil region" evidence="1">
    <location>
        <begin position="34"/>
        <end position="71"/>
    </location>
</feature>
<comment type="function">
    <text evidence="1">Divisome component that associates with the complex late in its assembly, after the Z-ring is formed, and is dependent on DivIC and PBP2B for its recruitment to the divisome. Together with EzrA, is a key component of the system that regulates PBP1 localization during cell cycle progression. Its main role could be the removal of PBP1 from the cell pole after pole maturation is completed. Also contributes to the recruitment of PBP1 to the division complex. Not essential for septum formation.</text>
</comment>
<comment type="subunit">
    <text evidence="1">Forms polymers through the coiled coil domains. Interacts with PBP1, MreC and EzrA.</text>
</comment>
<comment type="subcellular location">
    <subcellularLocation>
        <location evidence="1">Cytoplasm</location>
    </subcellularLocation>
    <text evidence="1">Shuttles between the lateral wall and the division site in a cell cycle-dependent manner.</text>
</comment>
<comment type="similarity">
    <text evidence="1">Belongs to the GpsB family.</text>
</comment>
<organism>
    <name type="scientific">Bacillus pumilus (strain SAFR-032)</name>
    <dbReference type="NCBI Taxonomy" id="315750"/>
    <lineage>
        <taxon>Bacteria</taxon>
        <taxon>Bacillati</taxon>
        <taxon>Bacillota</taxon>
        <taxon>Bacilli</taxon>
        <taxon>Bacillales</taxon>
        <taxon>Bacillaceae</taxon>
        <taxon>Bacillus</taxon>
    </lineage>
</organism>
<protein>
    <recommendedName>
        <fullName evidence="1">Cell cycle protein GpsB</fullName>
    </recommendedName>
    <alternativeName>
        <fullName evidence="1">Guiding PBP1-shuttling protein</fullName>
    </alternativeName>
</protein>
<keyword id="KW-0131">Cell cycle</keyword>
<keyword id="KW-0132">Cell division</keyword>
<keyword id="KW-0133">Cell shape</keyword>
<keyword id="KW-0175">Coiled coil</keyword>
<keyword id="KW-0963">Cytoplasm</keyword>
<name>GPSB_BACP2</name>
<evidence type="ECO:0000255" key="1">
    <source>
        <dbReference type="HAMAP-Rule" id="MF_02011"/>
    </source>
</evidence>
<gene>
    <name evidence="1" type="primary">gpsB</name>
    <name type="ordered locus">BPUM_1951</name>
</gene>
<dbReference type="EMBL" id="CP000813">
    <property type="protein sequence ID" value="ABV62621.1"/>
    <property type="molecule type" value="Genomic_DNA"/>
</dbReference>
<dbReference type="RefSeq" id="WP_012010336.1">
    <property type="nucleotide sequence ID" value="NZ_VEIS01000015.1"/>
</dbReference>
<dbReference type="SMR" id="A8FEF4"/>
<dbReference type="STRING" id="315750.BPUM_1951"/>
<dbReference type="GeneID" id="61770081"/>
<dbReference type="KEGG" id="bpu:BPUM_1951"/>
<dbReference type="eggNOG" id="COG3599">
    <property type="taxonomic scope" value="Bacteria"/>
</dbReference>
<dbReference type="HOGENOM" id="CLU_140309_1_0_9"/>
<dbReference type="OrthoDB" id="389699at2"/>
<dbReference type="Proteomes" id="UP000001355">
    <property type="component" value="Chromosome"/>
</dbReference>
<dbReference type="GO" id="GO:0005737">
    <property type="term" value="C:cytoplasm"/>
    <property type="evidence" value="ECO:0007669"/>
    <property type="project" value="UniProtKB-SubCell"/>
</dbReference>
<dbReference type="GO" id="GO:0051301">
    <property type="term" value="P:cell division"/>
    <property type="evidence" value="ECO:0007669"/>
    <property type="project" value="UniProtKB-UniRule"/>
</dbReference>
<dbReference type="GO" id="GO:0008360">
    <property type="term" value="P:regulation of cell shape"/>
    <property type="evidence" value="ECO:0007669"/>
    <property type="project" value="UniProtKB-UniRule"/>
</dbReference>
<dbReference type="Gene3D" id="6.10.250.660">
    <property type="match status" value="1"/>
</dbReference>
<dbReference type="HAMAP" id="MF_02011">
    <property type="entry name" value="GpsB"/>
    <property type="match status" value="1"/>
</dbReference>
<dbReference type="InterPro" id="IPR011229">
    <property type="entry name" value="Cell_cycle_GpsB"/>
</dbReference>
<dbReference type="InterPro" id="IPR019933">
    <property type="entry name" value="DivIVA_domain"/>
</dbReference>
<dbReference type="InterPro" id="IPR007793">
    <property type="entry name" value="DivIVA_fam"/>
</dbReference>
<dbReference type="NCBIfam" id="TIGR03544">
    <property type="entry name" value="DivI1A_domain"/>
    <property type="match status" value="1"/>
</dbReference>
<dbReference type="NCBIfam" id="NF010725">
    <property type="entry name" value="PRK14127.1"/>
    <property type="match status" value="1"/>
</dbReference>
<dbReference type="PANTHER" id="PTHR35794:SF1">
    <property type="entry name" value="CELL CYCLE PROTEIN GPSB"/>
    <property type="match status" value="1"/>
</dbReference>
<dbReference type="PANTHER" id="PTHR35794">
    <property type="entry name" value="CELL DIVISION PROTEIN DIVIVA"/>
    <property type="match status" value="1"/>
</dbReference>
<dbReference type="Pfam" id="PF05103">
    <property type="entry name" value="DivIVA"/>
    <property type="match status" value="1"/>
</dbReference>
<dbReference type="PIRSF" id="PIRSF029938">
    <property type="entry name" value="UCP029938"/>
    <property type="match status" value="1"/>
</dbReference>
<proteinExistence type="inferred from homology"/>
<reference key="1">
    <citation type="journal article" date="2007" name="PLoS ONE">
        <title>Paradoxical DNA repair and peroxide resistance gene conservation in Bacillus pumilus SAFR-032.</title>
        <authorList>
            <person name="Gioia J."/>
            <person name="Yerrapragada S."/>
            <person name="Qin X."/>
            <person name="Jiang H."/>
            <person name="Igboeli O.C."/>
            <person name="Muzny D."/>
            <person name="Dugan-Rocha S."/>
            <person name="Ding Y."/>
            <person name="Hawes A."/>
            <person name="Liu W."/>
            <person name="Perez L."/>
            <person name="Kovar C."/>
            <person name="Dinh H."/>
            <person name="Lee S."/>
            <person name="Nazareth L."/>
            <person name="Blyth P."/>
            <person name="Holder M."/>
            <person name="Buhay C."/>
            <person name="Tirumalai M.R."/>
            <person name="Liu Y."/>
            <person name="Dasgupta I."/>
            <person name="Bokhetache L."/>
            <person name="Fujita M."/>
            <person name="Karouia F."/>
            <person name="Eswara Moorthy P."/>
            <person name="Siefert J."/>
            <person name="Uzman A."/>
            <person name="Buzumbo P."/>
            <person name="Verma A."/>
            <person name="Zwiya H."/>
            <person name="McWilliams B.D."/>
            <person name="Olowu A."/>
            <person name="Clinkenbeard K.D."/>
            <person name="Newcombe D."/>
            <person name="Golebiewski L."/>
            <person name="Petrosino J.F."/>
            <person name="Nicholson W.L."/>
            <person name="Fox G.E."/>
            <person name="Venkateswaran K."/>
            <person name="Highlander S.K."/>
            <person name="Weinstock G.M."/>
        </authorList>
    </citation>
    <scope>NUCLEOTIDE SEQUENCE [LARGE SCALE GENOMIC DNA]</scope>
    <source>
        <strain>SAFR-032</strain>
    </source>
</reference>